<organism>
    <name type="scientific">Hahella chejuensis (strain KCTC 2396)</name>
    <dbReference type="NCBI Taxonomy" id="349521"/>
    <lineage>
        <taxon>Bacteria</taxon>
        <taxon>Pseudomonadati</taxon>
        <taxon>Pseudomonadota</taxon>
        <taxon>Gammaproteobacteria</taxon>
        <taxon>Oceanospirillales</taxon>
        <taxon>Hahellaceae</taxon>
        <taxon>Hahella</taxon>
    </lineage>
</organism>
<reference key="1">
    <citation type="journal article" date="2005" name="Nucleic Acids Res.">
        <title>Genomic blueprint of Hahella chejuensis, a marine microbe producing an algicidal agent.</title>
        <authorList>
            <person name="Jeong H."/>
            <person name="Yim J.H."/>
            <person name="Lee C."/>
            <person name="Choi S.-H."/>
            <person name="Park Y.K."/>
            <person name="Yoon S.H."/>
            <person name="Hur C.-G."/>
            <person name="Kang H.-Y."/>
            <person name="Kim D."/>
            <person name="Lee H.H."/>
            <person name="Park K.H."/>
            <person name="Park S.-H."/>
            <person name="Park H.-S."/>
            <person name="Lee H.K."/>
            <person name="Oh T.K."/>
            <person name="Kim J.F."/>
        </authorList>
    </citation>
    <scope>NUCLEOTIDE SEQUENCE [LARGE SCALE GENOMIC DNA]</scope>
    <source>
        <strain>KCTC 2396</strain>
    </source>
</reference>
<name>RNH2_HAHCH</name>
<keyword id="KW-0963">Cytoplasm</keyword>
<keyword id="KW-0255">Endonuclease</keyword>
<keyword id="KW-0378">Hydrolase</keyword>
<keyword id="KW-0464">Manganese</keyword>
<keyword id="KW-0479">Metal-binding</keyword>
<keyword id="KW-0540">Nuclease</keyword>
<keyword id="KW-1185">Reference proteome</keyword>
<evidence type="ECO:0000255" key="1">
    <source>
        <dbReference type="HAMAP-Rule" id="MF_00052"/>
    </source>
</evidence>
<evidence type="ECO:0000255" key="2">
    <source>
        <dbReference type="PROSITE-ProRule" id="PRU01319"/>
    </source>
</evidence>
<proteinExistence type="inferred from homology"/>
<sequence length="204" mass="21930">MKKLTSQISLFDHETGQLVAGVDEVGRGPLAGPVVAAAVILNPEKPIEGLNDSKKLSHRQRVALSQEIREKALAWATGWATVEEIDQINILQASLLAMQRAVAGLQVAPDLALIDGNKIPKLDMPAEAIVKGDSKVAAIAAASILAKVERDEELDRLDVIFPGYGLAGHKGYPTAQHLSALRELGVTDIHRRSYKPVQQLLQGD</sequence>
<comment type="function">
    <text evidence="1">Endonuclease that specifically degrades the RNA of RNA-DNA hybrids.</text>
</comment>
<comment type="catalytic activity">
    <reaction evidence="1">
        <text>Endonucleolytic cleavage to 5'-phosphomonoester.</text>
        <dbReference type="EC" id="3.1.26.4"/>
    </reaction>
</comment>
<comment type="cofactor">
    <cofactor evidence="1">
        <name>Mn(2+)</name>
        <dbReference type="ChEBI" id="CHEBI:29035"/>
    </cofactor>
    <cofactor evidence="1">
        <name>Mg(2+)</name>
        <dbReference type="ChEBI" id="CHEBI:18420"/>
    </cofactor>
    <text evidence="1">Manganese or magnesium. Binds 1 divalent metal ion per monomer in the absence of substrate. May bind a second metal ion after substrate binding.</text>
</comment>
<comment type="subcellular location">
    <subcellularLocation>
        <location evidence="1">Cytoplasm</location>
    </subcellularLocation>
</comment>
<comment type="similarity">
    <text evidence="1">Belongs to the RNase HII family.</text>
</comment>
<accession>Q2SBR2</accession>
<feature type="chain" id="PRO_0000235730" description="Ribonuclease HII">
    <location>
        <begin position="1"/>
        <end position="204"/>
    </location>
</feature>
<feature type="domain" description="RNase H type-2" evidence="2">
    <location>
        <begin position="17"/>
        <end position="204"/>
    </location>
</feature>
<feature type="binding site" evidence="1">
    <location>
        <position position="23"/>
    </location>
    <ligand>
        <name>a divalent metal cation</name>
        <dbReference type="ChEBI" id="CHEBI:60240"/>
    </ligand>
</feature>
<feature type="binding site" evidence="1">
    <location>
        <position position="24"/>
    </location>
    <ligand>
        <name>a divalent metal cation</name>
        <dbReference type="ChEBI" id="CHEBI:60240"/>
    </ligand>
</feature>
<feature type="binding site" evidence="1">
    <location>
        <position position="115"/>
    </location>
    <ligand>
        <name>a divalent metal cation</name>
        <dbReference type="ChEBI" id="CHEBI:60240"/>
    </ligand>
</feature>
<gene>
    <name evidence="1" type="primary">rnhB</name>
    <name type="ordered locus">HCH_05237</name>
</gene>
<protein>
    <recommendedName>
        <fullName evidence="1">Ribonuclease HII</fullName>
        <shortName evidence="1">RNase HII</shortName>
        <ecNumber evidence="1">3.1.26.4</ecNumber>
    </recommendedName>
</protein>
<dbReference type="EC" id="3.1.26.4" evidence="1"/>
<dbReference type="EMBL" id="CP000155">
    <property type="protein sequence ID" value="ABC31912.1"/>
    <property type="molecule type" value="Genomic_DNA"/>
</dbReference>
<dbReference type="RefSeq" id="WP_011398976.1">
    <property type="nucleotide sequence ID" value="NC_007645.1"/>
</dbReference>
<dbReference type="SMR" id="Q2SBR2"/>
<dbReference type="STRING" id="349521.HCH_05237"/>
<dbReference type="KEGG" id="hch:HCH_05237"/>
<dbReference type="eggNOG" id="COG0164">
    <property type="taxonomic scope" value="Bacteria"/>
</dbReference>
<dbReference type="HOGENOM" id="CLU_036532_3_2_6"/>
<dbReference type="OrthoDB" id="9803420at2"/>
<dbReference type="Proteomes" id="UP000000238">
    <property type="component" value="Chromosome"/>
</dbReference>
<dbReference type="GO" id="GO:0005737">
    <property type="term" value="C:cytoplasm"/>
    <property type="evidence" value="ECO:0007669"/>
    <property type="project" value="UniProtKB-SubCell"/>
</dbReference>
<dbReference type="GO" id="GO:0032299">
    <property type="term" value="C:ribonuclease H2 complex"/>
    <property type="evidence" value="ECO:0007669"/>
    <property type="project" value="TreeGrafter"/>
</dbReference>
<dbReference type="GO" id="GO:0030145">
    <property type="term" value="F:manganese ion binding"/>
    <property type="evidence" value="ECO:0007669"/>
    <property type="project" value="UniProtKB-UniRule"/>
</dbReference>
<dbReference type="GO" id="GO:0003723">
    <property type="term" value="F:RNA binding"/>
    <property type="evidence" value="ECO:0007669"/>
    <property type="project" value="InterPro"/>
</dbReference>
<dbReference type="GO" id="GO:0004523">
    <property type="term" value="F:RNA-DNA hybrid ribonuclease activity"/>
    <property type="evidence" value="ECO:0007669"/>
    <property type="project" value="UniProtKB-UniRule"/>
</dbReference>
<dbReference type="GO" id="GO:0043137">
    <property type="term" value="P:DNA replication, removal of RNA primer"/>
    <property type="evidence" value="ECO:0007669"/>
    <property type="project" value="TreeGrafter"/>
</dbReference>
<dbReference type="GO" id="GO:0006298">
    <property type="term" value="P:mismatch repair"/>
    <property type="evidence" value="ECO:0007669"/>
    <property type="project" value="TreeGrafter"/>
</dbReference>
<dbReference type="CDD" id="cd07182">
    <property type="entry name" value="RNase_HII_bacteria_HII_like"/>
    <property type="match status" value="1"/>
</dbReference>
<dbReference type="FunFam" id="3.30.420.10:FF:000006">
    <property type="entry name" value="Ribonuclease HII"/>
    <property type="match status" value="1"/>
</dbReference>
<dbReference type="Gene3D" id="3.30.420.10">
    <property type="entry name" value="Ribonuclease H-like superfamily/Ribonuclease H"/>
    <property type="match status" value="1"/>
</dbReference>
<dbReference type="HAMAP" id="MF_00052_B">
    <property type="entry name" value="RNase_HII_B"/>
    <property type="match status" value="1"/>
</dbReference>
<dbReference type="InterPro" id="IPR022898">
    <property type="entry name" value="RNase_HII"/>
</dbReference>
<dbReference type="InterPro" id="IPR001352">
    <property type="entry name" value="RNase_HII/HIII"/>
</dbReference>
<dbReference type="InterPro" id="IPR024567">
    <property type="entry name" value="RNase_HII/HIII_dom"/>
</dbReference>
<dbReference type="InterPro" id="IPR012337">
    <property type="entry name" value="RNaseH-like_sf"/>
</dbReference>
<dbReference type="InterPro" id="IPR036397">
    <property type="entry name" value="RNaseH_sf"/>
</dbReference>
<dbReference type="NCBIfam" id="NF000594">
    <property type="entry name" value="PRK00015.1-1"/>
    <property type="match status" value="1"/>
</dbReference>
<dbReference type="NCBIfam" id="NF000595">
    <property type="entry name" value="PRK00015.1-3"/>
    <property type="match status" value="1"/>
</dbReference>
<dbReference type="NCBIfam" id="NF000596">
    <property type="entry name" value="PRK00015.1-4"/>
    <property type="match status" value="1"/>
</dbReference>
<dbReference type="PANTHER" id="PTHR10954">
    <property type="entry name" value="RIBONUCLEASE H2 SUBUNIT A"/>
    <property type="match status" value="1"/>
</dbReference>
<dbReference type="PANTHER" id="PTHR10954:SF18">
    <property type="entry name" value="RIBONUCLEASE HII"/>
    <property type="match status" value="1"/>
</dbReference>
<dbReference type="Pfam" id="PF01351">
    <property type="entry name" value="RNase_HII"/>
    <property type="match status" value="1"/>
</dbReference>
<dbReference type="SUPFAM" id="SSF53098">
    <property type="entry name" value="Ribonuclease H-like"/>
    <property type="match status" value="1"/>
</dbReference>
<dbReference type="PROSITE" id="PS51975">
    <property type="entry name" value="RNASE_H_2"/>
    <property type="match status" value="1"/>
</dbReference>